<evidence type="ECO:0000255" key="1">
    <source>
        <dbReference type="HAMAP-Rule" id="MF_00736"/>
    </source>
</evidence>
<evidence type="ECO:0000305" key="2"/>
<keyword id="KW-0488">Methylation</keyword>
<keyword id="KW-1185">Reference proteome</keyword>
<keyword id="KW-0687">Ribonucleoprotein</keyword>
<keyword id="KW-0689">Ribosomal protein</keyword>
<keyword id="KW-0694">RNA-binding</keyword>
<keyword id="KW-0699">rRNA-binding</keyword>
<dbReference type="EMBL" id="CP000447">
    <property type="protein sequence ID" value="ABI70000.1"/>
    <property type="molecule type" value="Genomic_DNA"/>
</dbReference>
<dbReference type="RefSeq" id="WP_011635629.1">
    <property type="nucleotide sequence ID" value="NC_008345.1"/>
</dbReference>
<dbReference type="SMR" id="Q089R5"/>
<dbReference type="STRING" id="318167.Sfri_0137"/>
<dbReference type="KEGG" id="sfr:Sfri_0137"/>
<dbReference type="eggNOG" id="COG0080">
    <property type="taxonomic scope" value="Bacteria"/>
</dbReference>
<dbReference type="HOGENOM" id="CLU_074237_2_0_6"/>
<dbReference type="OrthoDB" id="9802408at2"/>
<dbReference type="Proteomes" id="UP000000684">
    <property type="component" value="Chromosome"/>
</dbReference>
<dbReference type="GO" id="GO:0022625">
    <property type="term" value="C:cytosolic large ribosomal subunit"/>
    <property type="evidence" value="ECO:0007669"/>
    <property type="project" value="TreeGrafter"/>
</dbReference>
<dbReference type="GO" id="GO:0070180">
    <property type="term" value="F:large ribosomal subunit rRNA binding"/>
    <property type="evidence" value="ECO:0007669"/>
    <property type="project" value="UniProtKB-UniRule"/>
</dbReference>
<dbReference type="GO" id="GO:0003735">
    <property type="term" value="F:structural constituent of ribosome"/>
    <property type="evidence" value="ECO:0007669"/>
    <property type="project" value="InterPro"/>
</dbReference>
<dbReference type="GO" id="GO:0006412">
    <property type="term" value="P:translation"/>
    <property type="evidence" value="ECO:0007669"/>
    <property type="project" value="UniProtKB-UniRule"/>
</dbReference>
<dbReference type="CDD" id="cd00349">
    <property type="entry name" value="Ribosomal_L11"/>
    <property type="match status" value="1"/>
</dbReference>
<dbReference type="FunFam" id="1.10.10.250:FF:000001">
    <property type="entry name" value="50S ribosomal protein L11"/>
    <property type="match status" value="1"/>
</dbReference>
<dbReference type="FunFam" id="3.30.1550.10:FF:000001">
    <property type="entry name" value="50S ribosomal protein L11"/>
    <property type="match status" value="1"/>
</dbReference>
<dbReference type="Gene3D" id="1.10.10.250">
    <property type="entry name" value="Ribosomal protein L11, C-terminal domain"/>
    <property type="match status" value="1"/>
</dbReference>
<dbReference type="Gene3D" id="3.30.1550.10">
    <property type="entry name" value="Ribosomal protein L11/L12, N-terminal domain"/>
    <property type="match status" value="1"/>
</dbReference>
<dbReference type="HAMAP" id="MF_00736">
    <property type="entry name" value="Ribosomal_uL11"/>
    <property type="match status" value="1"/>
</dbReference>
<dbReference type="InterPro" id="IPR000911">
    <property type="entry name" value="Ribosomal_uL11"/>
</dbReference>
<dbReference type="InterPro" id="IPR006519">
    <property type="entry name" value="Ribosomal_uL11_bac-typ"/>
</dbReference>
<dbReference type="InterPro" id="IPR020783">
    <property type="entry name" value="Ribosomal_uL11_C"/>
</dbReference>
<dbReference type="InterPro" id="IPR036769">
    <property type="entry name" value="Ribosomal_uL11_C_sf"/>
</dbReference>
<dbReference type="InterPro" id="IPR020785">
    <property type="entry name" value="Ribosomal_uL11_CS"/>
</dbReference>
<dbReference type="InterPro" id="IPR020784">
    <property type="entry name" value="Ribosomal_uL11_N"/>
</dbReference>
<dbReference type="InterPro" id="IPR036796">
    <property type="entry name" value="Ribosomal_uL11_N_sf"/>
</dbReference>
<dbReference type="NCBIfam" id="TIGR01632">
    <property type="entry name" value="L11_bact"/>
    <property type="match status" value="1"/>
</dbReference>
<dbReference type="PANTHER" id="PTHR11661">
    <property type="entry name" value="60S RIBOSOMAL PROTEIN L12"/>
    <property type="match status" value="1"/>
</dbReference>
<dbReference type="PANTHER" id="PTHR11661:SF1">
    <property type="entry name" value="LARGE RIBOSOMAL SUBUNIT PROTEIN UL11M"/>
    <property type="match status" value="1"/>
</dbReference>
<dbReference type="Pfam" id="PF00298">
    <property type="entry name" value="Ribosomal_L11"/>
    <property type="match status" value="1"/>
</dbReference>
<dbReference type="Pfam" id="PF03946">
    <property type="entry name" value="Ribosomal_L11_N"/>
    <property type="match status" value="1"/>
</dbReference>
<dbReference type="SMART" id="SM00649">
    <property type="entry name" value="RL11"/>
    <property type="match status" value="1"/>
</dbReference>
<dbReference type="SUPFAM" id="SSF54747">
    <property type="entry name" value="Ribosomal L11/L12e N-terminal domain"/>
    <property type="match status" value="1"/>
</dbReference>
<dbReference type="SUPFAM" id="SSF46906">
    <property type="entry name" value="Ribosomal protein L11, C-terminal domain"/>
    <property type="match status" value="1"/>
</dbReference>
<dbReference type="PROSITE" id="PS00359">
    <property type="entry name" value="RIBOSOMAL_L11"/>
    <property type="match status" value="1"/>
</dbReference>
<organism>
    <name type="scientific">Shewanella frigidimarina (strain NCIMB 400)</name>
    <dbReference type="NCBI Taxonomy" id="318167"/>
    <lineage>
        <taxon>Bacteria</taxon>
        <taxon>Pseudomonadati</taxon>
        <taxon>Pseudomonadota</taxon>
        <taxon>Gammaproteobacteria</taxon>
        <taxon>Alteromonadales</taxon>
        <taxon>Shewanellaceae</taxon>
        <taxon>Shewanella</taxon>
    </lineage>
</organism>
<accession>Q089R5</accession>
<sequence>MAKKIEAYIKLQVAAGAANPSPPVGPALGQKGVNIMEFCKAFNARTEKFEKGMPIPVVITVYNDRSFTFETKTPPASFLLLKAVGLKSGSGRPNTQKVGTIKRSAVQEIAETKAADMTGADIEAMTRSIEGTARSMGLVVED</sequence>
<protein>
    <recommendedName>
        <fullName evidence="1">Large ribosomal subunit protein uL11</fullName>
    </recommendedName>
    <alternativeName>
        <fullName evidence="2">50S ribosomal protein L11</fullName>
    </alternativeName>
</protein>
<reference key="1">
    <citation type="submission" date="2006-08" db="EMBL/GenBank/DDBJ databases">
        <title>Complete sequence of Shewanella frigidimarina NCIMB 400.</title>
        <authorList>
            <consortium name="US DOE Joint Genome Institute"/>
            <person name="Copeland A."/>
            <person name="Lucas S."/>
            <person name="Lapidus A."/>
            <person name="Barry K."/>
            <person name="Detter J.C."/>
            <person name="Glavina del Rio T."/>
            <person name="Hammon N."/>
            <person name="Israni S."/>
            <person name="Dalin E."/>
            <person name="Tice H."/>
            <person name="Pitluck S."/>
            <person name="Fredrickson J.K."/>
            <person name="Kolker E."/>
            <person name="McCuel L.A."/>
            <person name="DiChristina T."/>
            <person name="Nealson K.H."/>
            <person name="Newman D."/>
            <person name="Tiedje J.M."/>
            <person name="Zhou J."/>
            <person name="Romine M.F."/>
            <person name="Culley D.E."/>
            <person name="Serres M."/>
            <person name="Chertkov O."/>
            <person name="Brettin T."/>
            <person name="Bruce D."/>
            <person name="Han C."/>
            <person name="Tapia R."/>
            <person name="Gilna P."/>
            <person name="Schmutz J."/>
            <person name="Larimer F."/>
            <person name="Land M."/>
            <person name="Hauser L."/>
            <person name="Kyrpides N."/>
            <person name="Mikhailova N."/>
            <person name="Richardson P."/>
        </authorList>
    </citation>
    <scope>NUCLEOTIDE SEQUENCE [LARGE SCALE GENOMIC DNA]</scope>
    <source>
        <strain>NCIMB 400</strain>
    </source>
</reference>
<name>RL11_SHEFN</name>
<proteinExistence type="inferred from homology"/>
<gene>
    <name evidence="1" type="primary">rplK</name>
    <name type="ordered locus">Sfri_0137</name>
</gene>
<feature type="chain" id="PRO_1000046262" description="Large ribosomal subunit protein uL11">
    <location>
        <begin position="1"/>
        <end position="142"/>
    </location>
</feature>
<comment type="function">
    <text evidence="1">Forms part of the ribosomal stalk which helps the ribosome interact with GTP-bound translation factors.</text>
</comment>
<comment type="subunit">
    <text evidence="1">Part of the ribosomal stalk of the 50S ribosomal subunit. Interacts with L10 and the large rRNA to form the base of the stalk. L10 forms an elongated spine to which L12 dimers bind in a sequential fashion forming a multimeric L10(L12)X complex.</text>
</comment>
<comment type="PTM">
    <text evidence="1">One or more lysine residues are methylated.</text>
</comment>
<comment type="similarity">
    <text evidence="1">Belongs to the universal ribosomal protein uL11 family.</text>
</comment>